<comment type="function">
    <text evidence="1 2">Epithelial ion channel that plays an important role in the regulation of epithelial ion and water transport and fluid homeostasis. Mediates the transport of chloride ions across the cell membrane (By similarity). Possesses an intrinsic ATPase activity and utilizes ATP to gate its channel; the passive flow of anions through the channel is gated by cycles of ATP binding and hydrolysis by the ATP-binding domains (By similarity). The ion channel is also permeable to HCO(3)(-); selectivity depends on the extracellular chloride concentration. Exerts its function also by modulating the activity of other ion channels and transporters. Contributes to the regulation of the pH and the ion content of the epithelial fluid layer. Modulates the activity of the epithelial sodium channel (ENaC) complex, in part by regulating the cell surface expression of the ENaC complex. May regulate bicarbonate secretion and salvage in epithelial cells by regulating the transporter SLC4A7. Can inhibit the chloride channel activity of ANO1 (By similarity). Plays a role in the chloride and bicarbonate homeostasis during sperm epididymal maturation and capacitation (By similarity).</text>
</comment>
<comment type="catalytic activity">
    <reaction evidence="1">
        <text>ATP + H2O + closed Cl(-) channel = ADP + phosphate + open Cl(-) channel.</text>
        <dbReference type="EC" id="5.6.1.6"/>
    </reaction>
</comment>
<comment type="catalytic activity">
    <reaction evidence="1">
        <text>chloride(in) = chloride(out)</text>
        <dbReference type="Rhea" id="RHEA:29823"/>
        <dbReference type="ChEBI" id="CHEBI:17996"/>
    </reaction>
</comment>
<comment type="catalytic activity">
    <reaction evidence="1">
        <text>hydrogencarbonate(in) = hydrogencarbonate(out)</text>
        <dbReference type="Rhea" id="RHEA:28695"/>
        <dbReference type="ChEBI" id="CHEBI:17544"/>
    </reaction>
</comment>
<comment type="catalytic activity">
    <reaction evidence="1">
        <text>ATP + H2O = ADP + phosphate + H(+)</text>
        <dbReference type="Rhea" id="RHEA:13065"/>
        <dbReference type="ChEBI" id="CHEBI:15377"/>
        <dbReference type="ChEBI" id="CHEBI:15378"/>
        <dbReference type="ChEBI" id="CHEBI:30616"/>
        <dbReference type="ChEBI" id="CHEBI:43474"/>
        <dbReference type="ChEBI" id="CHEBI:456216"/>
    </reaction>
    <physiologicalReaction direction="left-to-right" evidence="1">
        <dbReference type="Rhea" id="RHEA:13066"/>
    </physiologicalReaction>
</comment>
<comment type="subunit">
    <text evidence="1 2 3">Monomer; does not require oligomerization for channel activity. May form oligomers in the membrane (By similarity). Interacts with SLC26A3, SLC26A6 and NHERF1 (By similarity). Interacts with SHANK2 (By similarity). Interacts with MYO6 (By similarity). Interacts (via C-terminus) with GOPC (via PDZ domain); this promotes CFTR internalization and thereby decreases channel activity. Interacts with SLC4A7 through NHERF1. Found in a complex with MYO5B and RAB11A. Interacts with ANO1. Interacts with SLC26A8 (By similarity). Interacts with AHCYL1; the interaction increases CFTR activity (By similarity). Interacts with CSE1L (By similarity). The core-glycosylated form interacts with GORASP2 (via PDZ GRASP-type 1 domain) in respone to ER stress (By similarity). Interacts with MARCHF2; the interaction leads to CFTR ubiqtuitination and degradation (By similarity). Interacts with ADGRG2 (By similarity).</text>
</comment>
<comment type="subcellular location">
    <subcellularLocation>
        <location evidence="2">Apical cell membrane</location>
        <topology evidence="1">Multi-pass membrane protein</topology>
    </subcellularLocation>
    <subcellularLocation>
        <location evidence="1">Early endosome membrane</location>
        <topology evidence="1">Multi-pass membrane protein</topology>
    </subcellularLocation>
    <subcellularLocation>
        <location evidence="2">Cell membrane</location>
        <topology evidence="1">Multi-pass membrane protein</topology>
    </subcellularLocation>
    <subcellularLocation>
        <location evidence="1">Recycling endosome membrane</location>
        <topology evidence="1">Multi-pass membrane protein</topology>
    </subcellularLocation>
    <subcellularLocation>
        <location evidence="1">Endoplasmic reticulum membrane</location>
        <topology evidence="1">Multi-pass membrane protein</topology>
    </subcellularLocation>
    <subcellularLocation>
        <location evidence="3">Nucleus</location>
    </subcellularLocation>
    <text evidence="1 3">The channel is internalized from the cell surface into an endosomal recycling compartment, from where it is recycled to the cell membrane. In the oviduct and bronchus, detected on the apical side of epithelial cells, but not associated with cilia. In Sertoli cells, a processed product is detected in the nucleus. ER stress induces GORASP2-mediated unconventional (ER/Golgi-independent) trafficking of core-glycosylated CFTR to cell membrane.</text>
</comment>
<comment type="domain">
    <text evidence="1 2">Binds and hydrolyzes ATP via the two cytoplasmic ABC transporter nucleotide-binding domains. The two ATP-binding domains interact with each other, forming a head-to-tail dimer. Normal ATPase activity requires interaction between the two domains. The first ABC transporter nucleotide-binding domain has no ATPase activity by itself.</text>
</comment>
<comment type="domain">
    <text evidence="1">The PDZ-binding motif mediates interactions with GOPC and with the SLC4A7, NHERF1/EBP50 complex.</text>
</comment>
<comment type="domain">
    <text evidence="1">The disordered R region mediates channel activation when it is phosphorylated, but not in the absence of phosphorylation.</text>
</comment>
<comment type="PTM">
    <text evidence="1">N-glycosylated.</text>
</comment>
<comment type="PTM">
    <text evidence="1">Phosphorylated; cAMP treatment promotes phosphorylation and activates the channel. Dephosphorylation decreases the ATPase activity (in vitro). Phosphorylation at PKA sites activates the channel. Phosphorylation at PKC sites enhances the response to phosphorylation by PKA. Phosphorylated by AMPK; this inhibits channel activity.</text>
</comment>
<comment type="PTM">
    <text evidence="1">Ubiquitinated, leading to its degradation in the lysosome. Deubiquitination by USP10 in early endosomes enhances its endocytic recycling to the cell membrane. Ubiquitinated by RNF185 during ER stress. Ubiquitinated by MARCHF2 (By similarity).</text>
</comment>
<comment type="similarity">
    <text evidence="7">Belongs to the ABC transporter superfamily. ABCC family. CFTR transporter (TC 3.A.1.202) subfamily.</text>
</comment>
<protein>
    <recommendedName>
        <fullName evidence="1">Cystic fibrosis transmembrane conductance regulator</fullName>
        <shortName>CFTR</shortName>
    </recommendedName>
    <alternativeName>
        <fullName>ATP-binding cassette sub-family C member 7</fullName>
    </alternativeName>
    <alternativeName>
        <fullName>Channel conductance-controlling ATPase</fullName>
        <ecNumber evidence="1">5.6.1.6</ecNumber>
    </alternativeName>
    <alternativeName>
        <fullName>cAMP-dependent chloride channel</fullName>
    </alternativeName>
</protein>
<feature type="chain" id="PRO_0000093421" description="Cystic fibrosis transmembrane conductance regulator">
    <location>
        <begin position="1"/>
        <end position="1481"/>
    </location>
</feature>
<feature type="topological domain" description="Cytoplasmic" evidence="1">
    <location>
        <begin position="1"/>
        <end position="77"/>
    </location>
</feature>
<feature type="transmembrane region" description="Helical; Name=1" evidence="1">
    <location>
        <begin position="78"/>
        <end position="98"/>
    </location>
</feature>
<feature type="topological domain" description="Extracellular" evidence="1">
    <location>
        <begin position="99"/>
        <end position="122"/>
    </location>
</feature>
<feature type="transmembrane region" description="Helical; Name=2" evidence="1">
    <location>
        <begin position="123"/>
        <end position="146"/>
    </location>
</feature>
<feature type="topological domain" description="Cytoplasmic" evidence="1">
    <location>
        <begin position="147"/>
        <end position="195"/>
    </location>
</feature>
<feature type="transmembrane region" description="Helical; Name=3" evidence="1">
    <location>
        <begin position="196"/>
        <end position="216"/>
    </location>
</feature>
<feature type="topological domain" description="Extracellular" evidence="1">
    <location>
        <begin position="217"/>
        <end position="222"/>
    </location>
</feature>
<feature type="transmembrane region" description="Helical; Name=4" evidence="1">
    <location>
        <begin position="223"/>
        <end position="243"/>
    </location>
</feature>
<feature type="topological domain" description="Cytoplasmic" evidence="1">
    <location>
        <begin position="244"/>
        <end position="298"/>
    </location>
</feature>
<feature type="transmembrane region" description="Helical; Name=5" evidence="1">
    <location>
        <begin position="299"/>
        <end position="319"/>
    </location>
</feature>
<feature type="topological domain" description="Extracellular" evidence="1">
    <location>
        <begin position="320"/>
        <end position="339"/>
    </location>
</feature>
<feature type="transmembrane region" description="Helical; Name=6" evidence="1">
    <location>
        <begin position="340"/>
        <end position="358"/>
    </location>
</feature>
<feature type="topological domain" description="Cytoplasmic" evidence="1">
    <location>
        <begin position="359"/>
        <end position="858"/>
    </location>
</feature>
<feature type="transmembrane region" description="Helical; Name=7" evidence="1">
    <location>
        <begin position="859"/>
        <end position="879"/>
    </location>
</feature>
<feature type="topological domain" description="Extracellular" evidence="1">
    <location>
        <begin position="880"/>
        <end position="918"/>
    </location>
</feature>
<feature type="transmembrane region" description="Discontinuously helical; Name=8" evidence="1">
    <location>
        <begin position="919"/>
        <end position="939"/>
    </location>
</feature>
<feature type="topological domain" description="Cytoplasmic" evidence="1">
    <location>
        <begin position="940"/>
        <end position="990"/>
    </location>
</feature>
<feature type="transmembrane region" description="Helical; Name=9" evidence="1">
    <location>
        <begin position="991"/>
        <end position="1011"/>
    </location>
</feature>
<feature type="topological domain" description="Extracellular" evidence="1">
    <location>
        <begin position="1012"/>
        <end position="1013"/>
    </location>
</feature>
<feature type="transmembrane region" description="Helical; Name=10" evidence="1">
    <location>
        <begin position="1014"/>
        <end position="1034"/>
    </location>
</feature>
<feature type="topological domain" description="Cytoplasmic" evidence="1">
    <location>
        <begin position="1035"/>
        <end position="1095"/>
    </location>
</feature>
<feature type="transmembrane region" description="Helical; Name=11" evidence="1">
    <location>
        <begin position="1096"/>
        <end position="1116"/>
    </location>
</feature>
<feature type="topological domain" description="Extracellular" evidence="1">
    <location>
        <begin position="1117"/>
        <end position="1130"/>
    </location>
</feature>
<feature type="transmembrane region" description="Helical; Name=12" evidence="1">
    <location>
        <begin position="1131"/>
        <end position="1151"/>
    </location>
</feature>
<feature type="topological domain" description="Cytoplasmic" evidence="1">
    <location>
        <begin position="1152"/>
        <end position="1481"/>
    </location>
</feature>
<feature type="domain" description="ABC transmembrane type-1 1" evidence="6">
    <location>
        <begin position="81"/>
        <end position="365"/>
    </location>
</feature>
<feature type="domain" description="ABC transporter 1" evidence="5">
    <location>
        <begin position="423"/>
        <end position="646"/>
    </location>
</feature>
<feature type="domain" description="ABC transmembrane type-1 2" evidence="6">
    <location>
        <begin position="859"/>
        <end position="1155"/>
    </location>
</feature>
<feature type="domain" description="ABC transporter 2" evidence="5">
    <location>
        <begin position="1211"/>
        <end position="1444"/>
    </location>
</feature>
<feature type="region of interest" description="Disordered R region" evidence="1">
    <location>
        <begin position="654"/>
        <end position="831"/>
    </location>
</feature>
<feature type="region of interest" description="Interaction with GORASP2" evidence="1">
    <location>
        <begin position="1387"/>
        <end position="1481"/>
    </location>
</feature>
<feature type="short sequence motif" description="PDZ-binding" evidence="1">
    <location>
        <begin position="1479"/>
        <end position="1481"/>
    </location>
</feature>
<feature type="binding site" evidence="1">
    <location>
        <position position="401"/>
    </location>
    <ligand>
        <name>ATP</name>
        <dbReference type="ChEBI" id="CHEBI:30616"/>
        <label>1</label>
    </ligand>
</feature>
<feature type="binding site" evidence="1">
    <location>
        <position position="434"/>
    </location>
    <ligand>
        <name>ATP</name>
        <dbReference type="ChEBI" id="CHEBI:30616"/>
        <label>1</label>
    </ligand>
</feature>
<feature type="binding site" evidence="5">
    <location>
        <begin position="458"/>
        <end position="465"/>
    </location>
    <ligand>
        <name>ATP</name>
        <dbReference type="ChEBI" id="CHEBI:30616"/>
        <label>1</label>
    </ligand>
</feature>
<feature type="binding site" evidence="2">
    <location>
        <position position="493"/>
    </location>
    <ligand>
        <name>ATP</name>
        <dbReference type="ChEBI" id="CHEBI:30616"/>
        <label>1</label>
    </ligand>
</feature>
<feature type="binding site" evidence="1">
    <location>
        <position position="1220"/>
    </location>
    <ligand>
        <name>ATP</name>
        <dbReference type="ChEBI" id="CHEBI:30616"/>
        <label>2</label>
    </ligand>
</feature>
<feature type="binding site" evidence="5">
    <location>
        <begin position="1245"/>
        <end position="1252"/>
    </location>
    <ligand>
        <name>ATP</name>
        <dbReference type="ChEBI" id="CHEBI:30616"/>
        <label>2</label>
    </ligand>
</feature>
<feature type="modified residue" description="Phosphoserine" evidence="1">
    <location>
        <position position="549"/>
    </location>
</feature>
<feature type="modified residue" description="Phosphoserine" evidence="1">
    <location>
        <position position="660"/>
    </location>
</feature>
<feature type="modified residue" description="Phosphoserine; by PKA" evidence="1">
    <location>
        <position position="670"/>
    </location>
</feature>
<feature type="modified residue" description="Phosphoserine" evidence="1">
    <location>
        <position position="686"/>
    </location>
</feature>
<feature type="modified residue" description="Phosphoserine" evidence="1">
    <location>
        <position position="700"/>
    </location>
</feature>
<feature type="modified residue" description="Phosphoserine" evidence="1">
    <location>
        <position position="712"/>
    </location>
</feature>
<feature type="modified residue" description="Phosphothreonine" evidence="1">
    <location>
        <position position="717"/>
    </location>
</feature>
<feature type="modified residue" description="Phosphoserine" evidence="1">
    <location>
        <position position="737"/>
    </location>
</feature>
<feature type="modified residue" description="Phosphoserine" evidence="1">
    <location>
        <position position="753"/>
    </location>
</feature>
<feature type="modified residue" description="Phosphoserine" evidence="1">
    <location>
        <position position="768"/>
    </location>
</feature>
<feature type="modified residue" description="Phosphoserine" evidence="1">
    <location>
        <position position="790"/>
    </location>
</feature>
<feature type="modified residue" description="Phosphoserine" evidence="1">
    <location>
        <position position="795"/>
    </location>
</feature>
<feature type="modified residue" description="Phosphoserine" evidence="1">
    <location>
        <position position="813"/>
    </location>
</feature>
<feature type="modified residue" description="Phosphoserine" evidence="1">
    <location>
        <position position="1445"/>
    </location>
</feature>
<feature type="modified residue" description="Phosphoserine" evidence="1">
    <location>
        <position position="1457"/>
    </location>
</feature>
<feature type="lipid moiety-binding region" description="S-palmitoyl cysteine" evidence="1">
    <location>
        <position position="524"/>
    </location>
</feature>
<feature type="lipid moiety-binding region" description="S-palmitoyl cysteine" evidence="1">
    <location>
        <position position="1396"/>
    </location>
</feature>
<feature type="glycosylation site" description="N-linked (GlcNAc...) asparagine" evidence="4">
    <location>
        <position position="894"/>
    </location>
</feature>
<feature type="glycosylation site" description="N-linked (GlcNAc...) asparagine" evidence="4">
    <location>
        <position position="900"/>
    </location>
</feature>
<feature type="cross-link" description="Glycyl lysine isopeptide (Lys-Gly) (interchain with G-Cter in ubiquitin)" evidence="1">
    <location>
        <position position="688"/>
    </location>
</feature>
<accession>Q7JII7</accession>
<gene>
    <name evidence="1" type="primary">CFTR</name>
    <name type="synonym">ABCC7</name>
</gene>
<reference key="1">
    <citation type="submission" date="1999-06" db="EMBL/GenBank/DDBJ databases">
        <title>CFTR genomic sequences from five primate species.</title>
        <authorList>
            <person name="Wine J.J."/>
            <person name="Kuo E."/>
            <person name="Hurlock G."/>
            <person name="Glavac D."/>
            <person name="Dean M."/>
        </authorList>
    </citation>
    <scope>NUCLEOTIDE SEQUENCE [GENOMIC DNA]</scope>
</reference>
<sequence>MQRSPLEKASVVSKLFFSWTRPILRKGYRQRLELSDIYQIPSADSADNLSEKLEREWDRELASKKNPKLINALRRCFFWRFMFYGILLYLGEVTKAVQPLLLGRIIASYDPDNKEERSIAIYLGIGLCLLFIVRTLLLHPAIFGLHHIGMQMRIAMFSLIYKKTLKLSSRVLDKISIGQLVSLLSNNLNKFDEGLALAHFVWIVPLQVALLMGLIWELLQASAFCGLGFLIVLALFQAGLGRMMMKYRDQRAGKINERLVITSEMIENIQSVKAYCWEEAMEKMIENLRQTELKLTRKAAYVRYFNSSAFFFSGFFVVFLSVLPYALIKGIVLRKIFTTISFCIVLRMAVTRQFPWAVQTWYDSLGAINKIQDFLQKQEYKTLEYNLTTTEVVMENVTAFWEEGFGELFEKAKQNNSNRKTSNDDDSLFFSNFSLLGTPVLKDINFKIERGQLLAVAGSTGAGKTSLLMMIMGELEPSEGKIKHSGRISFCSQFSWIMPGTIKENIIFGVSYDEYRYRSVINACQLEEDISKFAEKDNIVLGEGGITLSGGQRARISLARAVYKDADLYLLDSPFGYLDVLTEKEIFESCVCKLMANKTRILVTSKMEHLKKADKILILHEGSSYFYGTFSELQNLRPDFSSKLMGYDSFDQFSAERRNSILTETLRRFSLEGDAPVSWTETKKQSFKQTGEFGEKRKNSILNPINSIRKFSIVQKTPLQMNGIEEDSDEPLERRLSLVPDSEQGEVILPRISVISTGPTLQARRRQSVLNLMTHSVNQGQSIHRKTAASTRKVSLAPQANLTELDIYSRRLSQETGLEISEEINEEDLKECFFDDMESIPAVTTWNTYLRYITVHKSLIFVLIWCLVIFLAEVAASLVVLWFLGNTPPQDKGNSTYSRNNSYAVIITRTSSYYVFYIYVGVADTLLAMGFFRGLPLVHTLITVSKILHHKMLHSVLQAPMSTLNTLKAGGILNRFSKDIAILDDLLPLTIFDFIQLLLIVIGAIAVVAVLQPYIFVATVPVIVAFIMLRAYFLQTSQQLKQLESEGRSPIFTHLVTSLKGLWTLRAFGRQPYFETLFHKALNLHTANWFLYLSTLRWFQMRIEMIFVIFFIAVTFISILTTGEGEGTVGIILTLAMNIMSTLQWAVNSSIDVDSLMRSVSRVFKFIDMPTEEGKPTRSTKPYKNGQLSKVMVIENSHVKKDDIWPSGGQMTVKDLTAKYTEGGNPILENISFSISPGQRVGLLGRTGSGKSTLLSAFLRLLNTEGEIQIDGVSWDSITLQQWRKAFGVIPQKVFIFSGTFRKNLDPYEQWSDQEIWKVADEVGLRSVIEQFPGKLDFVLVDGGCVLSHGHKQLMCLARSVLSKAKILLLDEPSAHLDPVTYQIIRRTLKQAFADCTVILCEHRIEAMLECQQFLVIEENKVRQYDSIQKLLNERSLFRQAISPSDRVKLFPHRNSSKCKTQPQIAALKEETEEEVQDTRL</sequence>
<proteinExistence type="inferred from homology"/>
<organism>
    <name type="scientific">Macaca fuscata fuscata</name>
    <name type="common">Japanese macaque</name>
    <dbReference type="NCBI Taxonomy" id="9543"/>
    <lineage>
        <taxon>Eukaryota</taxon>
        <taxon>Metazoa</taxon>
        <taxon>Chordata</taxon>
        <taxon>Craniata</taxon>
        <taxon>Vertebrata</taxon>
        <taxon>Euteleostomi</taxon>
        <taxon>Mammalia</taxon>
        <taxon>Eutheria</taxon>
        <taxon>Euarchontoglires</taxon>
        <taxon>Primates</taxon>
        <taxon>Haplorrhini</taxon>
        <taxon>Catarrhini</taxon>
        <taxon>Cercopithecidae</taxon>
        <taxon>Cercopithecinae</taxon>
        <taxon>Macaca</taxon>
    </lineage>
</organism>
<evidence type="ECO:0000250" key="1">
    <source>
        <dbReference type="UniProtKB" id="P13569"/>
    </source>
</evidence>
<evidence type="ECO:0000250" key="2">
    <source>
        <dbReference type="UniProtKB" id="P26361"/>
    </source>
</evidence>
<evidence type="ECO:0000250" key="3">
    <source>
        <dbReference type="UniProtKB" id="P34158"/>
    </source>
</evidence>
<evidence type="ECO:0000255" key="4"/>
<evidence type="ECO:0000255" key="5">
    <source>
        <dbReference type="PROSITE-ProRule" id="PRU00434"/>
    </source>
</evidence>
<evidence type="ECO:0000255" key="6">
    <source>
        <dbReference type="PROSITE-ProRule" id="PRU00441"/>
    </source>
</evidence>
<evidence type="ECO:0000305" key="7"/>
<dbReference type="EC" id="5.6.1.6" evidence="1"/>
<dbReference type="EMBL" id="AF162373">
    <property type="protein sequence ID" value="AAD46904.1"/>
    <property type="molecule type" value="Genomic_DNA"/>
</dbReference>
<dbReference type="EMBL" id="AF162347">
    <property type="protein sequence ID" value="AAD46904.1"/>
    <property type="status" value="JOINED"/>
    <property type="molecule type" value="Genomic_DNA"/>
</dbReference>
<dbReference type="EMBL" id="AF162348">
    <property type="protein sequence ID" value="AAD46904.1"/>
    <property type="status" value="JOINED"/>
    <property type="molecule type" value="Genomic_DNA"/>
</dbReference>
<dbReference type="EMBL" id="AF162349">
    <property type="protein sequence ID" value="AAD46904.1"/>
    <property type="status" value="JOINED"/>
    <property type="molecule type" value="Genomic_DNA"/>
</dbReference>
<dbReference type="EMBL" id="AF162350">
    <property type="protein sequence ID" value="AAD46904.1"/>
    <property type="status" value="JOINED"/>
    <property type="molecule type" value="Genomic_DNA"/>
</dbReference>
<dbReference type="EMBL" id="AF162351">
    <property type="protein sequence ID" value="AAD46904.1"/>
    <property type="status" value="JOINED"/>
    <property type="molecule type" value="Genomic_DNA"/>
</dbReference>
<dbReference type="EMBL" id="AF162352">
    <property type="protein sequence ID" value="AAD46904.1"/>
    <property type="status" value="JOINED"/>
    <property type="molecule type" value="Genomic_DNA"/>
</dbReference>
<dbReference type="EMBL" id="AF162353">
    <property type="protein sequence ID" value="AAD46904.1"/>
    <property type="status" value="JOINED"/>
    <property type="molecule type" value="Genomic_DNA"/>
</dbReference>
<dbReference type="EMBL" id="AF162354">
    <property type="protein sequence ID" value="AAD46904.1"/>
    <property type="status" value="JOINED"/>
    <property type="molecule type" value="Genomic_DNA"/>
</dbReference>
<dbReference type="EMBL" id="AF162355">
    <property type="protein sequence ID" value="AAD46904.1"/>
    <property type="status" value="JOINED"/>
    <property type="molecule type" value="Genomic_DNA"/>
</dbReference>
<dbReference type="EMBL" id="AF162356">
    <property type="protein sequence ID" value="AAD46904.1"/>
    <property type="status" value="JOINED"/>
    <property type="molecule type" value="Genomic_DNA"/>
</dbReference>
<dbReference type="EMBL" id="AF162357">
    <property type="protein sequence ID" value="AAD46904.1"/>
    <property type="status" value="JOINED"/>
    <property type="molecule type" value="Genomic_DNA"/>
</dbReference>
<dbReference type="EMBL" id="AF162358">
    <property type="protein sequence ID" value="AAD46904.1"/>
    <property type="status" value="JOINED"/>
    <property type="molecule type" value="Genomic_DNA"/>
</dbReference>
<dbReference type="EMBL" id="AF162359">
    <property type="protein sequence ID" value="AAD46904.1"/>
    <property type="status" value="JOINED"/>
    <property type="molecule type" value="Genomic_DNA"/>
</dbReference>
<dbReference type="EMBL" id="AF162360">
    <property type="protein sequence ID" value="AAD46904.1"/>
    <property type="status" value="JOINED"/>
    <property type="molecule type" value="Genomic_DNA"/>
</dbReference>
<dbReference type="EMBL" id="AF162361">
    <property type="protein sequence ID" value="AAD46904.1"/>
    <property type="status" value="JOINED"/>
    <property type="molecule type" value="Genomic_DNA"/>
</dbReference>
<dbReference type="EMBL" id="AF162362">
    <property type="protein sequence ID" value="AAD46904.1"/>
    <property type="status" value="JOINED"/>
    <property type="molecule type" value="Genomic_DNA"/>
</dbReference>
<dbReference type="EMBL" id="AF162363">
    <property type="protein sequence ID" value="AAD46904.1"/>
    <property type="status" value="JOINED"/>
    <property type="molecule type" value="Genomic_DNA"/>
</dbReference>
<dbReference type="EMBL" id="AF162364">
    <property type="protein sequence ID" value="AAD46904.1"/>
    <property type="status" value="JOINED"/>
    <property type="molecule type" value="Genomic_DNA"/>
</dbReference>
<dbReference type="EMBL" id="AF162365">
    <property type="protein sequence ID" value="AAD46904.1"/>
    <property type="status" value="JOINED"/>
    <property type="molecule type" value="Genomic_DNA"/>
</dbReference>
<dbReference type="EMBL" id="AF162366">
    <property type="protein sequence ID" value="AAD46904.1"/>
    <property type="status" value="JOINED"/>
    <property type="molecule type" value="Genomic_DNA"/>
</dbReference>
<dbReference type="EMBL" id="AF162367">
    <property type="protein sequence ID" value="AAD46904.1"/>
    <property type="status" value="JOINED"/>
    <property type="molecule type" value="Genomic_DNA"/>
</dbReference>
<dbReference type="EMBL" id="AF162368">
    <property type="protein sequence ID" value="AAD46904.1"/>
    <property type="status" value="JOINED"/>
    <property type="molecule type" value="Genomic_DNA"/>
</dbReference>
<dbReference type="EMBL" id="AF162369">
    <property type="protein sequence ID" value="AAD46904.1"/>
    <property type="status" value="JOINED"/>
    <property type="molecule type" value="Genomic_DNA"/>
</dbReference>
<dbReference type="EMBL" id="AF162370">
    <property type="protein sequence ID" value="AAD46904.1"/>
    <property type="status" value="JOINED"/>
    <property type="molecule type" value="Genomic_DNA"/>
</dbReference>
<dbReference type="EMBL" id="AF162371">
    <property type="protein sequence ID" value="AAD46904.1"/>
    <property type="status" value="JOINED"/>
    <property type="molecule type" value="Genomic_DNA"/>
</dbReference>
<dbReference type="EMBL" id="AF162372">
    <property type="protein sequence ID" value="AAD46904.1"/>
    <property type="status" value="JOINED"/>
    <property type="molecule type" value="Genomic_DNA"/>
</dbReference>
<dbReference type="BMRB" id="Q7JII7"/>
<dbReference type="SMR" id="Q7JII7"/>
<dbReference type="GlyCosmos" id="Q7JII7">
    <property type="glycosylation" value="2 sites, No reported glycans"/>
</dbReference>
<dbReference type="GO" id="GO:0016324">
    <property type="term" value="C:apical plasma membrane"/>
    <property type="evidence" value="ECO:0000250"/>
    <property type="project" value="UniProtKB"/>
</dbReference>
<dbReference type="GO" id="GO:0034707">
    <property type="term" value="C:chloride channel complex"/>
    <property type="evidence" value="ECO:0007669"/>
    <property type="project" value="UniProtKB-KW"/>
</dbReference>
<dbReference type="GO" id="GO:0005829">
    <property type="term" value="C:cytosol"/>
    <property type="evidence" value="ECO:0007669"/>
    <property type="project" value="TreeGrafter"/>
</dbReference>
<dbReference type="GO" id="GO:0005769">
    <property type="term" value="C:early endosome"/>
    <property type="evidence" value="ECO:0000250"/>
    <property type="project" value="UniProtKB"/>
</dbReference>
<dbReference type="GO" id="GO:0031901">
    <property type="term" value="C:early endosome membrane"/>
    <property type="evidence" value="ECO:0007669"/>
    <property type="project" value="UniProtKB-SubCell"/>
</dbReference>
<dbReference type="GO" id="GO:0005789">
    <property type="term" value="C:endoplasmic reticulum membrane"/>
    <property type="evidence" value="ECO:0000250"/>
    <property type="project" value="UniProtKB"/>
</dbReference>
<dbReference type="GO" id="GO:0016020">
    <property type="term" value="C:membrane"/>
    <property type="evidence" value="ECO:0000250"/>
    <property type="project" value="UniProtKB"/>
</dbReference>
<dbReference type="GO" id="GO:0005634">
    <property type="term" value="C:nucleus"/>
    <property type="evidence" value="ECO:0000250"/>
    <property type="project" value="UniProtKB"/>
</dbReference>
<dbReference type="GO" id="GO:0005886">
    <property type="term" value="C:plasma membrane"/>
    <property type="evidence" value="ECO:0000250"/>
    <property type="project" value="UniProtKB"/>
</dbReference>
<dbReference type="GO" id="GO:0055038">
    <property type="term" value="C:recycling endosome membrane"/>
    <property type="evidence" value="ECO:0007669"/>
    <property type="project" value="UniProtKB-SubCell"/>
</dbReference>
<dbReference type="GO" id="GO:0140359">
    <property type="term" value="F:ABC-type transporter activity"/>
    <property type="evidence" value="ECO:0007669"/>
    <property type="project" value="InterPro"/>
</dbReference>
<dbReference type="GO" id="GO:0005524">
    <property type="term" value="F:ATP binding"/>
    <property type="evidence" value="ECO:0007669"/>
    <property type="project" value="UniProtKB-KW"/>
</dbReference>
<dbReference type="GO" id="GO:0016887">
    <property type="term" value="F:ATP hydrolysis activity"/>
    <property type="evidence" value="ECO:0000250"/>
    <property type="project" value="UniProtKB"/>
</dbReference>
<dbReference type="GO" id="GO:0015106">
    <property type="term" value="F:bicarbonate transmembrane transporter activity"/>
    <property type="evidence" value="ECO:0000250"/>
    <property type="project" value="UniProtKB"/>
</dbReference>
<dbReference type="GO" id="GO:0005254">
    <property type="term" value="F:chloride channel activity"/>
    <property type="evidence" value="ECO:0000250"/>
    <property type="project" value="UniProtKB"/>
</dbReference>
<dbReference type="GO" id="GO:0019869">
    <property type="term" value="F:chloride channel inhibitor activity"/>
    <property type="evidence" value="ECO:0000250"/>
    <property type="project" value="UniProtKB"/>
</dbReference>
<dbReference type="GO" id="GO:0015108">
    <property type="term" value="F:chloride transmembrane transporter activity"/>
    <property type="evidence" value="ECO:0000250"/>
    <property type="project" value="UniProtKB"/>
</dbReference>
<dbReference type="GO" id="GO:0005260">
    <property type="term" value="F:intracellularly ATP-gated chloride channel activity"/>
    <property type="evidence" value="ECO:0000250"/>
    <property type="project" value="UniProtKB"/>
</dbReference>
<dbReference type="GO" id="GO:0015701">
    <property type="term" value="P:bicarbonate transport"/>
    <property type="evidence" value="ECO:0000250"/>
    <property type="project" value="UniProtKB"/>
</dbReference>
<dbReference type="GO" id="GO:0071320">
    <property type="term" value="P:cellular response to cAMP"/>
    <property type="evidence" value="ECO:0000250"/>
    <property type="project" value="UniProtKB"/>
</dbReference>
<dbReference type="GO" id="GO:1904322">
    <property type="term" value="P:cellular response to forskolin"/>
    <property type="evidence" value="ECO:0000250"/>
    <property type="project" value="UniProtKB"/>
</dbReference>
<dbReference type="GO" id="GO:1902476">
    <property type="term" value="P:chloride transmembrane transport"/>
    <property type="evidence" value="ECO:0000250"/>
    <property type="project" value="UniProtKB"/>
</dbReference>
<dbReference type="GO" id="GO:0051454">
    <property type="term" value="P:intracellular pH elevation"/>
    <property type="evidence" value="ECO:0000250"/>
    <property type="project" value="UniProtKB"/>
</dbReference>
<dbReference type="GO" id="GO:0060081">
    <property type="term" value="P:membrane hyperpolarization"/>
    <property type="evidence" value="ECO:0000250"/>
    <property type="project" value="UniProtKB"/>
</dbReference>
<dbReference type="GO" id="GO:0050891">
    <property type="term" value="P:multicellular organismal-level water homeostasis"/>
    <property type="evidence" value="ECO:0000250"/>
    <property type="project" value="UniProtKB"/>
</dbReference>
<dbReference type="GO" id="GO:0034976">
    <property type="term" value="P:response to endoplasmic reticulum stress"/>
    <property type="evidence" value="ECO:0000250"/>
    <property type="project" value="UniProtKB"/>
</dbReference>
<dbReference type="GO" id="GO:0048240">
    <property type="term" value="P:sperm capacitation"/>
    <property type="evidence" value="ECO:0000250"/>
    <property type="project" value="UniProtKB"/>
</dbReference>
<dbReference type="GO" id="GO:0035377">
    <property type="term" value="P:transepithelial water transport"/>
    <property type="evidence" value="ECO:0000250"/>
    <property type="project" value="UniProtKB"/>
</dbReference>
<dbReference type="CDD" id="cd18594">
    <property type="entry name" value="ABC_6TM_CFTR_D1"/>
    <property type="match status" value="1"/>
</dbReference>
<dbReference type="CDD" id="cd18600">
    <property type="entry name" value="ABC_6TM_CFTR_D2"/>
    <property type="match status" value="1"/>
</dbReference>
<dbReference type="CDD" id="cd03291">
    <property type="entry name" value="ABCC_CFTR1"/>
    <property type="match status" value="1"/>
</dbReference>
<dbReference type="CDD" id="cd03289">
    <property type="entry name" value="ABCC_CFTR2"/>
    <property type="match status" value="1"/>
</dbReference>
<dbReference type="FunFam" id="1.20.1560.10:FF:000017">
    <property type="entry name" value="Cystic fibrosis transmembrane conductance regulator"/>
    <property type="match status" value="1"/>
</dbReference>
<dbReference type="FunFam" id="1.20.1560.10:FF:000019">
    <property type="entry name" value="Cystic fibrosis transmembrane conductance regulator"/>
    <property type="match status" value="1"/>
</dbReference>
<dbReference type="FunFam" id="3.40.50.300:FF:000581">
    <property type="entry name" value="Cystic fibrosis transmembrane conductance regulator"/>
    <property type="match status" value="1"/>
</dbReference>
<dbReference type="FunFam" id="3.40.50.300:FF:000591">
    <property type="entry name" value="Cystic fibrosis transmembrane conductance regulator"/>
    <property type="match status" value="1"/>
</dbReference>
<dbReference type="Gene3D" id="1.20.1560.10">
    <property type="entry name" value="ABC transporter type 1, transmembrane domain"/>
    <property type="match status" value="2"/>
</dbReference>
<dbReference type="Gene3D" id="3.40.50.300">
    <property type="entry name" value="P-loop containing nucleotide triphosphate hydrolases"/>
    <property type="match status" value="2"/>
</dbReference>
<dbReference type="InterPro" id="IPR003593">
    <property type="entry name" value="AAA+_ATPase"/>
</dbReference>
<dbReference type="InterPro" id="IPR011527">
    <property type="entry name" value="ABC1_TM_dom"/>
</dbReference>
<dbReference type="InterPro" id="IPR036640">
    <property type="entry name" value="ABC1_TM_sf"/>
</dbReference>
<dbReference type="InterPro" id="IPR003439">
    <property type="entry name" value="ABC_transporter-like_ATP-bd"/>
</dbReference>
<dbReference type="InterPro" id="IPR017871">
    <property type="entry name" value="ABC_transporter-like_CS"/>
</dbReference>
<dbReference type="InterPro" id="IPR050173">
    <property type="entry name" value="ABC_transporter_C-like"/>
</dbReference>
<dbReference type="InterPro" id="IPR009147">
    <property type="entry name" value="CFTR/ABCC7"/>
</dbReference>
<dbReference type="InterPro" id="IPR047082">
    <property type="entry name" value="CFTR1_ATP-bd_dom1"/>
</dbReference>
<dbReference type="InterPro" id="IPR025837">
    <property type="entry name" value="CFTR_reg_dom"/>
</dbReference>
<dbReference type="InterPro" id="IPR027417">
    <property type="entry name" value="P-loop_NTPase"/>
</dbReference>
<dbReference type="NCBIfam" id="TIGR01271">
    <property type="entry name" value="CFTR_protein"/>
    <property type="match status" value="1"/>
</dbReference>
<dbReference type="PANTHER" id="PTHR24223">
    <property type="entry name" value="ATP-BINDING CASSETTE SUB-FAMILY C"/>
    <property type="match status" value="1"/>
</dbReference>
<dbReference type="PANTHER" id="PTHR24223:SF19">
    <property type="entry name" value="CYSTIC FIBROSIS TRANSMEMBRANE CONDUCTANCE REGULATOR"/>
    <property type="match status" value="1"/>
</dbReference>
<dbReference type="Pfam" id="PF00664">
    <property type="entry name" value="ABC_membrane"/>
    <property type="match status" value="2"/>
</dbReference>
<dbReference type="Pfam" id="PF00005">
    <property type="entry name" value="ABC_tran"/>
    <property type="match status" value="2"/>
</dbReference>
<dbReference type="Pfam" id="PF14396">
    <property type="entry name" value="CFTR_R"/>
    <property type="match status" value="1"/>
</dbReference>
<dbReference type="PRINTS" id="PR01851">
    <property type="entry name" value="CYSFIBREGLTR"/>
</dbReference>
<dbReference type="SMART" id="SM00382">
    <property type="entry name" value="AAA"/>
    <property type="match status" value="2"/>
</dbReference>
<dbReference type="SUPFAM" id="SSF90123">
    <property type="entry name" value="ABC transporter transmembrane region"/>
    <property type="match status" value="2"/>
</dbReference>
<dbReference type="SUPFAM" id="SSF52540">
    <property type="entry name" value="P-loop containing nucleoside triphosphate hydrolases"/>
    <property type="match status" value="2"/>
</dbReference>
<dbReference type="PROSITE" id="PS50929">
    <property type="entry name" value="ABC_TM1F"/>
    <property type="match status" value="2"/>
</dbReference>
<dbReference type="PROSITE" id="PS00211">
    <property type="entry name" value="ABC_TRANSPORTER_1"/>
    <property type="match status" value="1"/>
</dbReference>
<dbReference type="PROSITE" id="PS50893">
    <property type="entry name" value="ABC_TRANSPORTER_2"/>
    <property type="match status" value="2"/>
</dbReference>
<name>CFTR_MACFU</name>
<keyword id="KW-0067">ATP-binding</keyword>
<keyword id="KW-1003">Cell membrane</keyword>
<keyword id="KW-0868">Chloride</keyword>
<keyword id="KW-0869">Chloride channel</keyword>
<keyword id="KW-0256">Endoplasmic reticulum</keyword>
<keyword id="KW-0967">Endosome</keyword>
<keyword id="KW-0325">Glycoprotein</keyword>
<keyword id="KW-0407">Ion channel</keyword>
<keyword id="KW-0406">Ion transport</keyword>
<keyword id="KW-0413">Isomerase</keyword>
<keyword id="KW-1017">Isopeptide bond</keyword>
<keyword id="KW-0449">Lipoprotein</keyword>
<keyword id="KW-0472">Membrane</keyword>
<keyword id="KW-0547">Nucleotide-binding</keyword>
<keyword id="KW-0539">Nucleus</keyword>
<keyword id="KW-0564">Palmitate</keyword>
<keyword id="KW-0597">Phosphoprotein</keyword>
<keyword id="KW-0677">Repeat</keyword>
<keyword id="KW-0812">Transmembrane</keyword>
<keyword id="KW-1133">Transmembrane helix</keyword>
<keyword id="KW-0813">Transport</keyword>
<keyword id="KW-0832">Ubl conjugation</keyword>